<reference key="1">
    <citation type="submission" date="2007-06" db="EMBL/GenBank/DDBJ databases">
        <title>Complete sequence of Sinorhizobium medicae WSM419 chromosome.</title>
        <authorList>
            <consortium name="US DOE Joint Genome Institute"/>
            <person name="Copeland A."/>
            <person name="Lucas S."/>
            <person name="Lapidus A."/>
            <person name="Barry K."/>
            <person name="Glavina del Rio T."/>
            <person name="Dalin E."/>
            <person name="Tice H."/>
            <person name="Pitluck S."/>
            <person name="Chain P."/>
            <person name="Malfatti S."/>
            <person name="Shin M."/>
            <person name="Vergez L."/>
            <person name="Schmutz J."/>
            <person name="Larimer F."/>
            <person name="Land M."/>
            <person name="Hauser L."/>
            <person name="Kyrpides N."/>
            <person name="Mikhailova N."/>
            <person name="Reeve W.G."/>
            <person name="Richardson P."/>
        </authorList>
    </citation>
    <scope>NUCLEOTIDE SEQUENCE [LARGE SCALE GENOMIC DNA]</scope>
    <source>
        <strain>WSM419</strain>
    </source>
</reference>
<sequence length="310" mass="33783">MSRPRKPKGRPISGWLILDKPLDFGSTEAVSKIKWLFKAQKAGHAGTLDPLASGMLPIALGDATKTVPYVMDGRKIYEFTVAWGEERSTDDLEGEVVRSSADRPAEEAIRALLPKYTGVIAQVPPQFSAIKIGGERAYDLAREGETVDIPAREVEVFRLSLIGSAPSLAQFEIECGKGTYVRSLARDMGRDLGCFGHIASLRRTFVAPFGEEDMVPLADLVALEKIEDEAERLAALDEHLIDTGEALSDLPHIAVNDDQAHRLRMGNPIILRGRDAPLPTPEAYATVQGKLVAIGEIAEGEFRPKRVFAG</sequence>
<proteinExistence type="inferred from homology"/>
<keyword id="KW-0413">Isomerase</keyword>
<keyword id="KW-0819">tRNA processing</keyword>
<protein>
    <recommendedName>
        <fullName evidence="1">tRNA pseudouridine synthase B</fullName>
        <ecNumber evidence="1">5.4.99.25</ecNumber>
    </recommendedName>
    <alternativeName>
        <fullName evidence="1">tRNA pseudouridine(55) synthase</fullName>
        <shortName evidence="1">Psi55 synthase</shortName>
    </alternativeName>
    <alternativeName>
        <fullName evidence="1">tRNA pseudouridylate synthase</fullName>
    </alternativeName>
    <alternativeName>
        <fullName evidence="1">tRNA-uridine isomerase</fullName>
    </alternativeName>
</protein>
<accession>A6UF31</accession>
<comment type="function">
    <text evidence="1">Responsible for synthesis of pseudouridine from uracil-55 in the psi GC loop of transfer RNAs.</text>
</comment>
<comment type="catalytic activity">
    <reaction evidence="1">
        <text>uridine(55) in tRNA = pseudouridine(55) in tRNA</text>
        <dbReference type="Rhea" id="RHEA:42532"/>
        <dbReference type="Rhea" id="RHEA-COMP:10101"/>
        <dbReference type="Rhea" id="RHEA-COMP:10102"/>
        <dbReference type="ChEBI" id="CHEBI:65314"/>
        <dbReference type="ChEBI" id="CHEBI:65315"/>
        <dbReference type="EC" id="5.4.99.25"/>
    </reaction>
</comment>
<comment type="similarity">
    <text evidence="1">Belongs to the pseudouridine synthase TruB family. Type 1 subfamily.</text>
</comment>
<evidence type="ECO:0000255" key="1">
    <source>
        <dbReference type="HAMAP-Rule" id="MF_01080"/>
    </source>
</evidence>
<feature type="chain" id="PRO_1000084685" description="tRNA pseudouridine synthase B">
    <location>
        <begin position="1"/>
        <end position="310"/>
    </location>
</feature>
<feature type="active site" description="Nucleophile" evidence="1">
    <location>
        <position position="49"/>
    </location>
</feature>
<organism>
    <name type="scientific">Sinorhizobium medicae (strain WSM419)</name>
    <name type="common">Ensifer medicae</name>
    <dbReference type="NCBI Taxonomy" id="366394"/>
    <lineage>
        <taxon>Bacteria</taxon>
        <taxon>Pseudomonadati</taxon>
        <taxon>Pseudomonadota</taxon>
        <taxon>Alphaproteobacteria</taxon>
        <taxon>Hyphomicrobiales</taxon>
        <taxon>Rhizobiaceae</taxon>
        <taxon>Sinorhizobium/Ensifer group</taxon>
        <taxon>Sinorhizobium</taxon>
    </lineage>
</organism>
<gene>
    <name evidence="1" type="primary">truB</name>
    <name type="ordered locus">Smed_3443</name>
</gene>
<name>TRUB_SINMW</name>
<dbReference type="EC" id="5.4.99.25" evidence="1"/>
<dbReference type="EMBL" id="CP000738">
    <property type="protein sequence ID" value="ABR62261.1"/>
    <property type="molecule type" value="Genomic_DNA"/>
</dbReference>
<dbReference type="RefSeq" id="WP_012067641.1">
    <property type="nucleotide sequence ID" value="NC_009636.1"/>
</dbReference>
<dbReference type="RefSeq" id="YP_001329096.1">
    <property type="nucleotide sequence ID" value="NC_009636.1"/>
</dbReference>
<dbReference type="SMR" id="A6UF31"/>
<dbReference type="STRING" id="366394.Smed_3443"/>
<dbReference type="GeneID" id="61610994"/>
<dbReference type="KEGG" id="smd:Smed_3443"/>
<dbReference type="PATRIC" id="fig|366394.8.peg.6693"/>
<dbReference type="eggNOG" id="COG0130">
    <property type="taxonomic scope" value="Bacteria"/>
</dbReference>
<dbReference type="HOGENOM" id="CLU_032087_0_3_5"/>
<dbReference type="OrthoDB" id="9802309at2"/>
<dbReference type="Proteomes" id="UP000001108">
    <property type="component" value="Chromosome"/>
</dbReference>
<dbReference type="GO" id="GO:0003723">
    <property type="term" value="F:RNA binding"/>
    <property type="evidence" value="ECO:0007669"/>
    <property type="project" value="InterPro"/>
</dbReference>
<dbReference type="GO" id="GO:0160148">
    <property type="term" value="F:tRNA pseudouridine(55) synthase activity"/>
    <property type="evidence" value="ECO:0007669"/>
    <property type="project" value="UniProtKB-EC"/>
</dbReference>
<dbReference type="GO" id="GO:1990481">
    <property type="term" value="P:mRNA pseudouridine synthesis"/>
    <property type="evidence" value="ECO:0007669"/>
    <property type="project" value="TreeGrafter"/>
</dbReference>
<dbReference type="GO" id="GO:0031119">
    <property type="term" value="P:tRNA pseudouridine synthesis"/>
    <property type="evidence" value="ECO:0007669"/>
    <property type="project" value="UniProtKB-UniRule"/>
</dbReference>
<dbReference type="CDD" id="cd02573">
    <property type="entry name" value="PseudoU_synth_EcTruB"/>
    <property type="match status" value="1"/>
</dbReference>
<dbReference type="Gene3D" id="3.30.2350.10">
    <property type="entry name" value="Pseudouridine synthase"/>
    <property type="match status" value="1"/>
</dbReference>
<dbReference type="HAMAP" id="MF_01080">
    <property type="entry name" value="TruB_bact"/>
    <property type="match status" value="1"/>
</dbReference>
<dbReference type="InterPro" id="IPR020103">
    <property type="entry name" value="PsdUridine_synth_cat_dom_sf"/>
</dbReference>
<dbReference type="InterPro" id="IPR002501">
    <property type="entry name" value="PsdUridine_synth_N"/>
</dbReference>
<dbReference type="InterPro" id="IPR014780">
    <property type="entry name" value="tRNA_psdUridine_synth_TruB"/>
</dbReference>
<dbReference type="InterPro" id="IPR032819">
    <property type="entry name" value="TruB_C"/>
</dbReference>
<dbReference type="NCBIfam" id="TIGR00431">
    <property type="entry name" value="TruB"/>
    <property type="match status" value="1"/>
</dbReference>
<dbReference type="PANTHER" id="PTHR13767:SF2">
    <property type="entry name" value="PSEUDOURIDYLATE SYNTHASE TRUB1"/>
    <property type="match status" value="1"/>
</dbReference>
<dbReference type="PANTHER" id="PTHR13767">
    <property type="entry name" value="TRNA-PSEUDOURIDINE SYNTHASE"/>
    <property type="match status" value="1"/>
</dbReference>
<dbReference type="Pfam" id="PF16198">
    <property type="entry name" value="TruB_C_2"/>
    <property type="match status" value="1"/>
</dbReference>
<dbReference type="Pfam" id="PF01509">
    <property type="entry name" value="TruB_N"/>
    <property type="match status" value="1"/>
</dbReference>
<dbReference type="SUPFAM" id="SSF55120">
    <property type="entry name" value="Pseudouridine synthase"/>
    <property type="match status" value="1"/>
</dbReference>